<proteinExistence type="inferred from homology"/>
<dbReference type="EC" id="1.1.1.94" evidence="1"/>
<dbReference type="EMBL" id="AE005674">
    <property type="protein sequence ID" value="AAN45094.1"/>
    <property type="molecule type" value="Genomic_DNA"/>
</dbReference>
<dbReference type="EMBL" id="AE014073">
    <property type="protein sequence ID" value="AAP19098.1"/>
    <property type="molecule type" value="Genomic_DNA"/>
</dbReference>
<dbReference type="RefSeq" id="NP_709387.1">
    <property type="nucleotide sequence ID" value="NC_004337.2"/>
</dbReference>
<dbReference type="RefSeq" id="WP_001076194.1">
    <property type="nucleotide sequence ID" value="NZ_WPGW01000082.1"/>
</dbReference>
<dbReference type="SMR" id="P0A6T0"/>
<dbReference type="STRING" id="198214.SF3647"/>
<dbReference type="PaxDb" id="198214-SF3647"/>
<dbReference type="GeneID" id="1024433"/>
<dbReference type="GeneID" id="93778322"/>
<dbReference type="KEGG" id="sfl:SF3647"/>
<dbReference type="KEGG" id="sfx:S4121"/>
<dbReference type="PATRIC" id="fig|198214.7.peg.4306"/>
<dbReference type="HOGENOM" id="CLU_033449_0_2_6"/>
<dbReference type="UniPathway" id="UPA00940"/>
<dbReference type="Proteomes" id="UP000001006">
    <property type="component" value="Chromosome"/>
</dbReference>
<dbReference type="Proteomes" id="UP000002673">
    <property type="component" value="Chromosome"/>
</dbReference>
<dbReference type="GO" id="GO:0005829">
    <property type="term" value="C:cytosol"/>
    <property type="evidence" value="ECO:0007669"/>
    <property type="project" value="TreeGrafter"/>
</dbReference>
<dbReference type="GO" id="GO:0047952">
    <property type="term" value="F:glycerol-3-phosphate dehydrogenase [NAD(P)+] activity"/>
    <property type="evidence" value="ECO:0007669"/>
    <property type="project" value="UniProtKB-UniRule"/>
</dbReference>
<dbReference type="GO" id="GO:0051287">
    <property type="term" value="F:NAD binding"/>
    <property type="evidence" value="ECO:0007669"/>
    <property type="project" value="InterPro"/>
</dbReference>
<dbReference type="GO" id="GO:0005975">
    <property type="term" value="P:carbohydrate metabolic process"/>
    <property type="evidence" value="ECO:0007669"/>
    <property type="project" value="InterPro"/>
</dbReference>
<dbReference type="GO" id="GO:0046167">
    <property type="term" value="P:glycerol-3-phosphate biosynthetic process"/>
    <property type="evidence" value="ECO:0007669"/>
    <property type="project" value="UniProtKB-UniRule"/>
</dbReference>
<dbReference type="GO" id="GO:0046168">
    <property type="term" value="P:glycerol-3-phosphate catabolic process"/>
    <property type="evidence" value="ECO:0007669"/>
    <property type="project" value="InterPro"/>
</dbReference>
<dbReference type="GO" id="GO:0046474">
    <property type="term" value="P:glycerophospholipid biosynthetic process"/>
    <property type="evidence" value="ECO:0007669"/>
    <property type="project" value="TreeGrafter"/>
</dbReference>
<dbReference type="FunFam" id="1.10.1040.10:FF:000001">
    <property type="entry name" value="Glycerol-3-phosphate dehydrogenase [NAD(P)+]"/>
    <property type="match status" value="1"/>
</dbReference>
<dbReference type="FunFam" id="3.40.50.720:FF:000019">
    <property type="entry name" value="Glycerol-3-phosphate dehydrogenase [NAD(P)+]"/>
    <property type="match status" value="1"/>
</dbReference>
<dbReference type="Gene3D" id="1.10.1040.10">
    <property type="entry name" value="N-(1-d-carboxylethyl)-l-norvaline Dehydrogenase, domain 2"/>
    <property type="match status" value="1"/>
</dbReference>
<dbReference type="Gene3D" id="3.40.50.720">
    <property type="entry name" value="NAD(P)-binding Rossmann-like Domain"/>
    <property type="match status" value="1"/>
</dbReference>
<dbReference type="HAMAP" id="MF_00394">
    <property type="entry name" value="NAD_Glyc3P_dehydrog"/>
    <property type="match status" value="1"/>
</dbReference>
<dbReference type="InterPro" id="IPR008927">
    <property type="entry name" value="6-PGluconate_DH-like_C_sf"/>
</dbReference>
<dbReference type="InterPro" id="IPR013328">
    <property type="entry name" value="6PGD_dom2"/>
</dbReference>
<dbReference type="InterPro" id="IPR006168">
    <property type="entry name" value="G3P_DH_NAD-dep"/>
</dbReference>
<dbReference type="InterPro" id="IPR006109">
    <property type="entry name" value="G3P_DH_NAD-dep_C"/>
</dbReference>
<dbReference type="InterPro" id="IPR011128">
    <property type="entry name" value="G3P_DH_NAD-dep_N"/>
</dbReference>
<dbReference type="InterPro" id="IPR036291">
    <property type="entry name" value="NAD(P)-bd_dom_sf"/>
</dbReference>
<dbReference type="NCBIfam" id="NF000939">
    <property type="entry name" value="PRK00094.1-1"/>
    <property type="match status" value="1"/>
</dbReference>
<dbReference type="NCBIfam" id="NF000940">
    <property type="entry name" value="PRK00094.1-2"/>
    <property type="match status" value="1"/>
</dbReference>
<dbReference type="NCBIfam" id="NF000942">
    <property type="entry name" value="PRK00094.1-4"/>
    <property type="match status" value="1"/>
</dbReference>
<dbReference type="PANTHER" id="PTHR11728">
    <property type="entry name" value="GLYCEROL-3-PHOSPHATE DEHYDROGENASE"/>
    <property type="match status" value="1"/>
</dbReference>
<dbReference type="PANTHER" id="PTHR11728:SF1">
    <property type="entry name" value="GLYCEROL-3-PHOSPHATE DEHYDROGENASE [NAD(+)] 2, CHLOROPLASTIC"/>
    <property type="match status" value="1"/>
</dbReference>
<dbReference type="Pfam" id="PF07479">
    <property type="entry name" value="NAD_Gly3P_dh_C"/>
    <property type="match status" value="1"/>
</dbReference>
<dbReference type="Pfam" id="PF01210">
    <property type="entry name" value="NAD_Gly3P_dh_N"/>
    <property type="match status" value="1"/>
</dbReference>
<dbReference type="PIRSF" id="PIRSF000114">
    <property type="entry name" value="Glycerol-3-P_dh"/>
    <property type="match status" value="1"/>
</dbReference>
<dbReference type="PRINTS" id="PR00077">
    <property type="entry name" value="GPDHDRGNASE"/>
</dbReference>
<dbReference type="SUPFAM" id="SSF48179">
    <property type="entry name" value="6-phosphogluconate dehydrogenase C-terminal domain-like"/>
    <property type="match status" value="1"/>
</dbReference>
<dbReference type="SUPFAM" id="SSF51735">
    <property type="entry name" value="NAD(P)-binding Rossmann-fold domains"/>
    <property type="match status" value="1"/>
</dbReference>
<dbReference type="PROSITE" id="PS00957">
    <property type="entry name" value="NAD_G3PDH"/>
    <property type="match status" value="1"/>
</dbReference>
<feature type="chain" id="PRO_0000138022" description="Glycerol-3-phosphate dehydrogenase [NAD(P)+]">
    <location>
        <begin position="1"/>
        <end position="339"/>
    </location>
</feature>
<feature type="active site" description="Proton acceptor" evidence="1">
    <location>
        <position position="195"/>
    </location>
</feature>
<feature type="binding site" evidence="1">
    <location>
        <position position="15"/>
    </location>
    <ligand>
        <name>NADPH</name>
        <dbReference type="ChEBI" id="CHEBI:57783"/>
    </ligand>
</feature>
<feature type="binding site" evidence="1">
    <location>
        <position position="16"/>
    </location>
    <ligand>
        <name>NADPH</name>
        <dbReference type="ChEBI" id="CHEBI:57783"/>
    </ligand>
</feature>
<feature type="binding site" evidence="1">
    <location>
        <position position="36"/>
    </location>
    <ligand>
        <name>NADPH</name>
        <dbReference type="ChEBI" id="CHEBI:57783"/>
    </ligand>
</feature>
<feature type="binding site" evidence="1">
    <location>
        <position position="110"/>
    </location>
    <ligand>
        <name>NADPH</name>
        <dbReference type="ChEBI" id="CHEBI:57783"/>
    </ligand>
</feature>
<feature type="binding site" evidence="1">
    <location>
        <position position="110"/>
    </location>
    <ligand>
        <name>sn-glycerol 3-phosphate</name>
        <dbReference type="ChEBI" id="CHEBI:57597"/>
    </ligand>
</feature>
<feature type="binding site" evidence="1">
    <location>
        <position position="139"/>
    </location>
    <ligand>
        <name>sn-glycerol 3-phosphate</name>
        <dbReference type="ChEBI" id="CHEBI:57597"/>
    </ligand>
</feature>
<feature type="binding site" evidence="1">
    <location>
        <position position="141"/>
    </location>
    <ligand>
        <name>sn-glycerol 3-phosphate</name>
        <dbReference type="ChEBI" id="CHEBI:57597"/>
    </ligand>
</feature>
<feature type="binding site" evidence="1">
    <location>
        <position position="143"/>
    </location>
    <ligand>
        <name>NADPH</name>
        <dbReference type="ChEBI" id="CHEBI:57783"/>
    </ligand>
</feature>
<feature type="binding site" evidence="1">
    <location>
        <position position="195"/>
    </location>
    <ligand>
        <name>sn-glycerol 3-phosphate</name>
        <dbReference type="ChEBI" id="CHEBI:57597"/>
    </ligand>
</feature>
<feature type="binding site" evidence="1">
    <location>
        <position position="248"/>
    </location>
    <ligand>
        <name>sn-glycerol 3-phosphate</name>
        <dbReference type="ChEBI" id="CHEBI:57597"/>
    </ligand>
</feature>
<feature type="binding site" evidence="1">
    <location>
        <position position="258"/>
    </location>
    <ligand>
        <name>sn-glycerol 3-phosphate</name>
        <dbReference type="ChEBI" id="CHEBI:57597"/>
    </ligand>
</feature>
<feature type="binding site" evidence="1">
    <location>
        <position position="259"/>
    </location>
    <ligand>
        <name>NADPH</name>
        <dbReference type="ChEBI" id="CHEBI:57783"/>
    </ligand>
</feature>
<feature type="binding site" evidence="1">
    <location>
        <position position="259"/>
    </location>
    <ligand>
        <name>sn-glycerol 3-phosphate</name>
        <dbReference type="ChEBI" id="CHEBI:57597"/>
    </ligand>
</feature>
<feature type="binding site" evidence="1">
    <location>
        <position position="260"/>
    </location>
    <ligand>
        <name>sn-glycerol 3-phosphate</name>
        <dbReference type="ChEBI" id="CHEBI:57597"/>
    </ligand>
</feature>
<feature type="binding site" evidence="1">
    <location>
        <position position="283"/>
    </location>
    <ligand>
        <name>NADPH</name>
        <dbReference type="ChEBI" id="CHEBI:57783"/>
    </ligand>
</feature>
<feature type="binding site" evidence="1">
    <location>
        <position position="285"/>
    </location>
    <ligand>
        <name>NADPH</name>
        <dbReference type="ChEBI" id="CHEBI:57783"/>
    </ligand>
</feature>
<name>GPDA_SHIFL</name>
<protein>
    <recommendedName>
        <fullName evidence="1">Glycerol-3-phosphate dehydrogenase [NAD(P)+]</fullName>
        <ecNumber evidence="1">1.1.1.94</ecNumber>
    </recommendedName>
    <alternativeName>
        <fullName evidence="1">NAD(P)(+)-dependent glycerol-3-phosphate dehydrogenase</fullName>
    </alternativeName>
    <alternativeName>
        <fullName evidence="1">NAD(P)H-dependent dihydroxyacetone-phosphate reductase</fullName>
    </alternativeName>
</protein>
<sequence length="339" mass="36362">MNQRNASMTVIGAGSYGTALAITLARNGHEVVLWGHDPEHIATLERDRCNAAFLPDVPFPDTLHLESDLATALAASRNILVVVPSHVFGEVLRQIKPLMRPDARLVWATKGLEAETGRLLQDVAREALGDQIPLAVISGPTFAKELAAGLPTAISLASTDQTFADDLQQLLHCGKSFRVYSNPDFIGVQLGGAVKNVIAIGAGMSDGIGFGANARTALITRGLAEMSRLGAALGADPATFMGMAGLGDLVLTCTDNQSRNRRFGMMLGQGMDVQSAQEKIGQVVEGYRNTKEVRELAHRFGVEMPITEEIYQVLYCGKNAREAALTLLGRARKDERSSH</sequence>
<keyword id="KW-0963">Cytoplasm</keyword>
<keyword id="KW-0444">Lipid biosynthesis</keyword>
<keyword id="KW-0443">Lipid metabolism</keyword>
<keyword id="KW-0520">NAD</keyword>
<keyword id="KW-0521">NADP</keyword>
<keyword id="KW-0547">Nucleotide-binding</keyword>
<keyword id="KW-0560">Oxidoreductase</keyword>
<keyword id="KW-0594">Phospholipid biosynthesis</keyword>
<keyword id="KW-1208">Phospholipid metabolism</keyword>
<keyword id="KW-1185">Reference proteome</keyword>
<accession>P0A6T0</accession>
<accession>P37606</accession>
<organism>
    <name type="scientific">Shigella flexneri</name>
    <dbReference type="NCBI Taxonomy" id="623"/>
    <lineage>
        <taxon>Bacteria</taxon>
        <taxon>Pseudomonadati</taxon>
        <taxon>Pseudomonadota</taxon>
        <taxon>Gammaproteobacteria</taxon>
        <taxon>Enterobacterales</taxon>
        <taxon>Enterobacteriaceae</taxon>
        <taxon>Shigella</taxon>
    </lineage>
</organism>
<evidence type="ECO:0000255" key="1">
    <source>
        <dbReference type="HAMAP-Rule" id="MF_00394"/>
    </source>
</evidence>
<reference key="1">
    <citation type="journal article" date="2002" name="Nucleic Acids Res.">
        <title>Genome sequence of Shigella flexneri 2a: insights into pathogenicity through comparison with genomes of Escherichia coli K12 and O157.</title>
        <authorList>
            <person name="Jin Q."/>
            <person name="Yuan Z."/>
            <person name="Xu J."/>
            <person name="Wang Y."/>
            <person name="Shen Y."/>
            <person name="Lu W."/>
            <person name="Wang J."/>
            <person name="Liu H."/>
            <person name="Yang J."/>
            <person name="Yang F."/>
            <person name="Zhang X."/>
            <person name="Zhang J."/>
            <person name="Yang G."/>
            <person name="Wu H."/>
            <person name="Qu D."/>
            <person name="Dong J."/>
            <person name="Sun L."/>
            <person name="Xue Y."/>
            <person name="Zhao A."/>
            <person name="Gao Y."/>
            <person name="Zhu J."/>
            <person name="Kan B."/>
            <person name="Ding K."/>
            <person name="Chen S."/>
            <person name="Cheng H."/>
            <person name="Yao Z."/>
            <person name="He B."/>
            <person name="Chen R."/>
            <person name="Ma D."/>
            <person name="Qiang B."/>
            <person name="Wen Y."/>
            <person name="Hou Y."/>
            <person name="Yu J."/>
        </authorList>
    </citation>
    <scope>NUCLEOTIDE SEQUENCE [LARGE SCALE GENOMIC DNA]</scope>
    <source>
        <strain>301 / Serotype 2a</strain>
    </source>
</reference>
<reference key="2">
    <citation type="journal article" date="2003" name="Infect. Immun.">
        <title>Complete genome sequence and comparative genomics of Shigella flexneri serotype 2a strain 2457T.</title>
        <authorList>
            <person name="Wei J."/>
            <person name="Goldberg M.B."/>
            <person name="Burland V."/>
            <person name="Venkatesan M.M."/>
            <person name="Deng W."/>
            <person name="Fournier G."/>
            <person name="Mayhew G.F."/>
            <person name="Plunkett G. III"/>
            <person name="Rose D.J."/>
            <person name="Darling A."/>
            <person name="Mau B."/>
            <person name="Perna N.T."/>
            <person name="Payne S.M."/>
            <person name="Runyen-Janecky L.J."/>
            <person name="Zhou S."/>
            <person name="Schwartz D.C."/>
            <person name="Blattner F.R."/>
        </authorList>
    </citation>
    <scope>NUCLEOTIDE SEQUENCE [LARGE SCALE GENOMIC DNA]</scope>
    <source>
        <strain>ATCC 700930 / 2457T / Serotype 2a</strain>
    </source>
</reference>
<comment type="function">
    <text evidence="1">Catalyzes the reduction of the glycolytic intermediate dihydroxyacetone phosphate (DHAP) to sn-glycerol 3-phosphate (G3P), the key precursor for phospholipid synthesis.</text>
</comment>
<comment type="catalytic activity">
    <reaction evidence="1">
        <text>sn-glycerol 3-phosphate + NAD(+) = dihydroxyacetone phosphate + NADH + H(+)</text>
        <dbReference type="Rhea" id="RHEA:11092"/>
        <dbReference type="ChEBI" id="CHEBI:15378"/>
        <dbReference type="ChEBI" id="CHEBI:57540"/>
        <dbReference type="ChEBI" id="CHEBI:57597"/>
        <dbReference type="ChEBI" id="CHEBI:57642"/>
        <dbReference type="ChEBI" id="CHEBI:57945"/>
        <dbReference type="EC" id="1.1.1.94"/>
    </reaction>
    <physiologicalReaction direction="right-to-left" evidence="1">
        <dbReference type="Rhea" id="RHEA:11094"/>
    </physiologicalReaction>
</comment>
<comment type="catalytic activity">
    <reaction evidence="1">
        <text>sn-glycerol 3-phosphate + NADP(+) = dihydroxyacetone phosphate + NADPH + H(+)</text>
        <dbReference type="Rhea" id="RHEA:11096"/>
        <dbReference type="ChEBI" id="CHEBI:15378"/>
        <dbReference type="ChEBI" id="CHEBI:57597"/>
        <dbReference type="ChEBI" id="CHEBI:57642"/>
        <dbReference type="ChEBI" id="CHEBI:57783"/>
        <dbReference type="ChEBI" id="CHEBI:58349"/>
        <dbReference type="EC" id="1.1.1.94"/>
    </reaction>
    <physiologicalReaction direction="right-to-left" evidence="1">
        <dbReference type="Rhea" id="RHEA:11098"/>
    </physiologicalReaction>
</comment>
<comment type="pathway">
    <text evidence="1">Membrane lipid metabolism; glycerophospholipid metabolism.</text>
</comment>
<comment type="subcellular location">
    <subcellularLocation>
        <location evidence="1">Cytoplasm</location>
    </subcellularLocation>
</comment>
<comment type="similarity">
    <text evidence="1">Belongs to the NAD-dependent glycerol-3-phosphate dehydrogenase family.</text>
</comment>
<gene>
    <name evidence="1" type="primary">gpsA</name>
    <name type="ordered locus">SF3647</name>
    <name type="ordered locus">S4121</name>
</gene>